<proteinExistence type="inferred from homology"/>
<reference key="1">
    <citation type="journal article" date="2006" name="Mol. Microbiol.">
        <title>Role of pathogenicity island-associated integrases in the genome plasticity of uropathogenic Escherichia coli strain 536.</title>
        <authorList>
            <person name="Hochhut B."/>
            <person name="Wilde C."/>
            <person name="Balling G."/>
            <person name="Middendorf B."/>
            <person name="Dobrindt U."/>
            <person name="Brzuszkiewicz E."/>
            <person name="Gottschalk G."/>
            <person name="Carniel E."/>
            <person name="Hacker J."/>
        </authorList>
    </citation>
    <scope>NUCLEOTIDE SEQUENCE [LARGE SCALE GENOMIC DNA]</scope>
    <source>
        <strain>536 / UPEC</strain>
    </source>
</reference>
<name>YBJQ_ECOL5</name>
<sequence>MQFSTTPTLEGQTIVEYCGVVTGEAILGANIFRDFFAGIRDIVGGRSGAYEKELRKAREIAFEELGSQARALGADAVVGIDIDYETVGQNGSMLMVSVSGTAVKTRR</sequence>
<organism>
    <name type="scientific">Escherichia coli O6:K15:H31 (strain 536 / UPEC)</name>
    <dbReference type="NCBI Taxonomy" id="362663"/>
    <lineage>
        <taxon>Bacteria</taxon>
        <taxon>Pseudomonadati</taxon>
        <taxon>Pseudomonadota</taxon>
        <taxon>Gammaproteobacteria</taxon>
        <taxon>Enterobacterales</taxon>
        <taxon>Enterobacteriaceae</taxon>
        <taxon>Escherichia</taxon>
    </lineage>
</organism>
<dbReference type="EMBL" id="CP000247">
    <property type="protein sequence ID" value="ABG68896.1"/>
    <property type="molecule type" value="Genomic_DNA"/>
</dbReference>
<dbReference type="RefSeq" id="WP_001160737.1">
    <property type="nucleotide sequence ID" value="NC_008253.1"/>
</dbReference>
<dbReference type="SMR" id="Q0TJI3"/>
<dbReference type="KEGG" id="ecp:ECP_0881"/>
<dbReference type="HOGENOM" id="CLU_117144_3_0_6"/>
<dbReference type="Proteomes" id="UP000009182">
    <property type="component" value="Chromosome"/>
</dbReference>
<dbReference type="Gene3D" id="3.30.110.70">
    <property type="entry name" value="Hypothetical protein apc22750. Chain B"/>
    <property type="match status" value="1"/>
</dbReference>
<dbReference type="HAMAP" id="MF_00338">
    <property type="entry name" value="UPF0145"/>
    <property type="match status" value="1"/>
</dbReference>
<dbReference type="InterPro" id="IPR035439">
    <property type="entry name" value="UPF0145_dom_sf"/>
</dbReference>
<dbReference type="InterPro" id="IPR002765">
    <property type="entry name" value="UPF0145_YbjQ-like"/>
</dbReference>
<dbReference type="NCBIfam" id="NF002776">
    <property type="entry name" value="PRK02877.1"/>
    <property type="match status" value="1"/>
</dbReference>
<dbReference type="PANTHER" id="PTHR34068">
    <property type="entry name" value="UPF0145 PROTEIN YBJQ"/>
    <property type="match status" value="1"/>
</dbReference>
<dbReference type="PANTHER" id="PTHR34068:SF1">
    <property type="entry name" value="UPF0145 PROTEIN YBJQ"/>
    <property type="match status" value="1"/>
</dbReference>
<dbReference type="Pfam" id="PF01906">
    <property type="entry name" value="YbjQ_1"/>
    <property type="match status" value="1"/>
</dbReference>
<dbReference type="SUPFAM" id="SSF117782">
    <property type="entry name" value="YbjQ-like"/>
    <property type="match status" value="1"/>
</dbReference>
<protein>
    <recommendedName>
        <fullName evidence="1">UPF0145 protein YbjQ</fullName>
    </recommendedName>
</protein>
<gene>
    <name evidence="1" type="primary">ybjQ</name>
    <name type="ordered locus">ECP_0881</name>
</gene>
<accession>Q0TJI3</accession>
<comment type="similarity">
    <text evidence="1">Belongs to the UPF0145 family.</text>
</comment>
<evidence type="ECO:0000255" key="1">
    <source>
        <dbReference type="HAMAP-Rule" id="MF_00338"/>
    </source>
</evidence>
<feature type="chain" id="PRO_1000012994" description="UPF0145 protein YbjQ">
    <location>
        <begin position="1"/>
        <end position="107"/>
    </location>
</feature>